<feature type="signal peptide" evidence="1">
    <location>
        <begin position="1"/>
        <end position="19"/>
    </location>
</feature>
<feature type="chain" id="PRO_0000323580" description="Probable serine/threonine-protein kinase gdt2">
    <location>
        <begin position="20"/>
        <end position="1637"/>
    </location>
</feature>
<feature type="topological domain" description="Extracellular" evidence="1">
    <location>
        <begin position="20"/>
        <end position="896"/>
    </location>
</feature>
<feature type="transmembrane region" description="Helical" evidence="1">
    <location>
        <begin position="897"/>
        <end position="917"/>
    </location>
</feature>
<feature type="topological domain" description="Cytoplasmic" evidence="1">
    <location>
        <begin position="918"/>
        <end position="1637"/>
    </location>
</feature>
<feature type="domain" description="Protein kinase" evidence="2">
    <location>
        <begin position="1290"/>
        <end position="1547"/>
    </location>
</feature>
<feature type="region of interest" description="Disordered" evidence="4">
    <location>
        <begin position="977"/>
        <end position="1000"/>
    </location>
</feature>
<feature type="region of interest" description="Disordered" evidence="4">
    <location>
        <begin position="1557"/>
        <end position="1637"/>
    </location>
</feature>
<feature type="compositionally biased region" description="Polar residues" evidence="4">
    <location>
        <begin position="977"/>
        <end position="990"/>
    </location>
</feature>
<feature type="compositionally biased region" description="Low complexity" evidence="4">
    <location>
        <begin position="991"/>
        <end position="1000"/>
    </location>
</feature>
<feature type="compositionally biased region" description="Low complexity" evidence="4">
    <location>
        <begin position="1568"/>
        <end position="1589"/>
    </location>
</feature>
<feature type="compositionally biased region" description="Low complexity" evidence="4">
    <location>
        <begin position="1597"/>
        <end position="1637"/>
    </location>
</feature>
<feature type="active site" description="Proton acceptor" evidence="2 3">
    <location>
        <position position="1408"/>
    </location>
</feature>
<feature type="binding site" evidence="2">
    <location>
        <begin position="1296"/>
        <end position="1304"/>
    </location>
    <ligand>
        <name>ATP</name>
        <dbReference type="ChEBI" id="CHEBI:30616"/>
    </ligand>
</feature>
<feature type="binding site" evidence="2">
    <location>
        <position position="1317"/>
    </location>
    <ligand>
        <name>ATP</name>
        <dbReference type="ChEBI" id="CHEBI:30616"/>
    </ligand>
</feature>
<organism>
    <name type="scientific">Dictyostelium discoideum</name>
    <name type="common">Social amoeba</name>
    <dbReference type="NCBI Taxonomy" id="44689"/>
    <lineage>
        <taxon>Eukaryota</taxon>
        <taxon>Amoebozoa</taxon>
        <taxon>Evosea</taxon>
        <taxon>Eumycetozoa</taxon>
        <taxon>Dictyostelia</taxon>
        <taxon>Dictyosteliales</taxon>
        <taxon>Dictyosteliaceae</taxon>
        <taxon>Dictyostelium</taxon>
    </lineage>
</organism>
<evidence type="ECO:0000255" key="1"/>
<evidence type="ECO:0000255" key="2">
    <source>
        <dbReference type="PROSITE-ProRule" id="PRU00159"/>
    </source>
</evidence>
<evidence type="ECO:0000255" key="3">
    <source>
        <dbReference type="PROSITE-ProRule" id="PRU10027"/>
    </source>
</evidence>
<evidence type="ECO:0000256" key="4">
    <source>
        <dbReference type="SAM" id="MobiDB-lite"/>
    </source>
</evidence>
<evidence type="ECO:0000269" key="5">
    <source>
    </source>
</evidence>
<evidence type="ECO:0000305" key="6"/>
<keyword id="KW-0067">ATP-binding</keyword>
<keyword id="KW-0217">Developmental protein</keyword>
<keyword id="KW-0418">Kinase</keyword>
<keyword id="KW-0472">Membrane</keyword>
<keyword id="KW-0547">Nucleotide-binding</keyword>
<keyword id="KW-1185">Reference proteome</keyword>
<keyword id="KW-0723">Serine/threonine-protein kinase</keyword>
<keyword id="KW-0732">Signal</keyword>
<keyword id="KW-0808">Transferase</keyword>
<keyword id="KW-0812">Transmembrane</keyword>
<keyword id="KW-1133">Transmembrane helix</keyword>
<comment type="function">
    <text evidence="5">Regulates the transition between growth and differentiation.</text>
</comment>
<comment type="catalytic activity">
    <reaction>
        <text>L-seryl-[protein] + ATP = O-phospho-L-seryl-[protein] + ADP + H(+)</text>
        <dbReference type="Rhea" id="RHEA:17989"/>
        <dbReference type="Rhea" id="RHEA-COMP:9863"/>
        <dbReference type="Rhea" id="RHEA-COMP:11604"/>
        <dbReference type="ChEBI" id="CHEBI:15378"/>
        <dbReference type="ChEBI" id="CHEBI:29999"/>
        <dbReference type="ChEBI" id="CHEBI:30616"/>
        <dbReference type="ChEBI" id="CHEBI:83421"/>
        <dbReference type="ChEBI" id="CHEBI:456216"/>
        <dbReference type="EC" id="2.7.11.1"/>
    </reaction>
</comment>
<comment type="catalytic activity">
    <reaction>
        <text>L-threonyl-[protein] + ATP = O-phospho-L-threonyl-[protein] + ADP + H(+)</text>
        <dbReference type="Rhea" id="RHEA:46608"/>
        <dbReference type="Rhea" id="RHEA-COMP:11060"/>
        <dbReference type="Rhea" id="RHEA-COMP:11605"/>
        <dbReference type="ChEBI" id="CHEBI:15378"/>
        <dbReference type="ChEBI" id="CHEBI:30013"/>
        <dbReference type="ChEBI" id="CHEBI:30616"/>
        <dbReference type="ChEBI" id="CHEBI:61977"/>
        <dbReference type="ChEBI" id="CHEBI:456216"/>
        <dbReference type="EC" id="2.7.11.1"/>
    </reaction>
</comment>
<comment type="subcellular location">
    <subcellularLocation>
        <location evidence="6">Membrane</location>
        <topology evidence="6">Single-pass type I membrane protein</topology>
    </subcellularLocation>
</comment>
<comment type="developmental stage">
    <text evidence="5">Expressed at the same level in vegetative cells and throughout development, with a slight peak at the time when the cells are aggregating.</text>
</comment>
<comment type="disruption phenotype">
    <text evidence="5">Cells initiate multicellular development prematurely.</text>
</comment>
<comment type="similarity">
    <text evidence="6">In the N-terminal section; belongs to the GDT family.</text>
</comment>
<comment type="similarity">
    <text evidence="6">In the C-terminal section; belongs to the protein kinase superfamily. TKL Ser/Thr protein kinase family.</text>
</comment>
<dbReference type="EC" id="2.7.11.1"/>
<dbReference type="EMBL" id="AAFI02000005">
    <property type="protein sequence ID" value="EAL72683.1"/>
    <property type="molecule type" value="Genomic_DNA"/>
</dbReference>
<dbReference type="RefSeq" id="XP_646340.1">
    <property type="nucleotide sequence ID" value="XM_641248.1"/>
</dbReference>
<dbReference type="SMR" id="Q55CZ1"/>
<dbReference type="FunCoup" id="Q55CZ1">
    <property type="interactions" value="141"/>
</dbReference>
<dbReference type="STRING" id="44689.Q55CZ1"/>
<dbReference type="PaxDb" id="44689-DDB0220631"/>
<dbReference type="EnsemblProtists" id="EAL72683">
    <property type="protein sequence ID" value="EAL72683"/>
    <property type="gene ID" value="DDB_G0270666"/>
</dbReference>
<dbReference type="GeneID" id="8617295"/>
<dbReference type="KEGG" id="ddi:DDB_G0270666"/>
<dbReference type="dictyBase" id="DDB_G0270666">
    <property type="gene designation" value="gdt2"/>
</dbReference>
<dbReference type="VEuPathDB" id="AmoebaDB:DDB_G0270666"/>
<dbReference type="eggNOG" id="KOG0192">
    <property type="taxonomic scope" value="Eukaryota"/>
</dbReference>
<dbReference type="HOGENOM" id="CLU_251247_0_0_1"/>
<dbReference type="InParanoid" id="Q55CZ1"/>
<dbReference type="PhylomeDB" id="Q55CZ1"/>
<dbReference type="PRO" id="PR:Q55CZ1"/>
<dbReference type="Proteomes" id="UP000002195">
    <property type="component" value="Chromosome 1"/>
</dbReference>
<dbReference type="GO" id="GO:0016020">
    <property type="term" value="C:membrane"/>
    <property type="evidence" value="ECO:0007669"/>
    <property type="project" value="UniProtKB-SubCell"/>
</dbReference>
<dbReference type="GO" id="GO:0005524">
    <property type="term" value="F:ATP binding"/>
    <property type="evidence" value="ECO:0007669"/>
    <property type="project" value="UniProtKB-KW"/>
</dbReference>
<dbReference type="GO" id="GO:0106310">
    <property type="term" value="F:protein serine kinase activity"/>
    <property type="evidence" value="ECO:0007669"/>
    <property type="project" value="RHEA"/>
</dbReference>
<dbReference type="GO" id="GO:0004674">
    <property type="term" value="F:protein serine/threonine kinase activity"/>
    <property type="evidence" value="ECO:0007669"/>
    <property type="project" value="UniProtKB-KW"/>
</dbReference>
<dbReference type="GO" id="GO:0051093">
    <property type="term" value="P:negative regulation of developmental process"/>
    <property type="evidence" value="ECO:0000315"/>
    <property type="project" value="dictyBase"/>
</dbReference>
<dbReference type="GO" id="GO:0050793">
    <property type="term" value="P:regulation of developmental process"/>
    <property type="evidence" value="ECO:0000318"/>
    <property type="project" value="GO_Central"/>
</dbReference>
<dbReference type="CDD" id="cd13999">
    <property type="entry name" value="STKc_MAP3K-like"/>
    <property type="match status" value="1"/>
</dbReference>
<dbReference type="Gene3D" id="3.30.200.20">
    <property type="entry name" value="Phosphorylase Kinase, domain 1"/>
    <property type="match status" value="1"/>
</dbReference>
<dbReference type="Gene3D" id="1.10.510.10">
    <property type="entry name" value="Transferase(Phosphotransferase) domain 1"/>
    <property type="match status" value="1"/>
</dbReference>
<dbReference type="InterPro" id="IPR052015">
    <property type="entry name" value="GDT_regulator"/>
</dbReference>
<dbReference type="InterPro" id="IPR011009">
    <property type="entry name" value="Kinase-like_dom_sf"/>
</dbReference>
<dbReference type="InterPro" id="IPR000719">
    <property type="entry name" value="Prot_kinase_dom"/>
</dbReference>
<dbReference type="InterPro" id="IPR001245">
    <property type="entry name" value="Ser-Thr/Tyr_kinase_cat_dom"/>
</dbReference>
<dbReference type="InterPro" id="IPR008271">
    <property type="entry name" value="Ser/Thr_kinase_AS"/>
</dbReference>
<dbReference type="InterPro" id="IPR026237">
    <property type="entry name" value="STKINASEGDT"/>
</dbReference>
<dbReference type="PANTHER" id="PTHR47774">
    <property type="entry name" value="GROWTH-DIFFERENTIATION TRANSITION PROTEIN 5-RELATED"/>
    <property type="match status" value="1"/>
</dbReference>
<dbReference type="PANTHER" id="PTHR47774:SF1">
    <property type="entry name" value="GROWTH-DIFFERENTIATION TRANSITION PROTEIN 5-RELATED"/>
    <property type="match status" value="1"/>
</dbReference>
<dbReference type="Pfam" id="PF07714">
    <property type="entry name" value="PK_Tyr_Ser-Thr"/>
    <property type="match status" value="1"/>
</dbReference>
<dbReference type="PRINTS" id="PR02079">
    <property type="entry name" value="STKINASEGDT"/>
</dbReference>
<dbReference type="PRINTS" id="PR00109">
    <property type="entry name" value="TYRKINASE"/>
</dbReference>
<dbReference type="SMART" id="SM00220">
    <property type="entry name" value="S_TKc"/>
    <property type="match status" value="1"/>
</dbReference>
<dbReference type="SUPFAM" id="SSF56112">
    <property type="entry name" value="Protein kinase-like (PK-like)"/>
    <property type="match status" value="1"/>
</dbReference>
<dbReference type="PROSITE" id="PS50011">
    <property type="entry name" value="PROTEIN_KINASE_DOM"/>
    <property type="match status" value="1"/>
</dbReference>
<dbReference type="PROSITE" id="PS00108">
    <property type="entry name" value="PROTEIN_KINASE_ST"/>
    <property type="match status" value="1"/>
</dbReference>
<protein>
    <recommendedName>
        <fullName>Probable serine/threonine-protein kinase gdt2</fullName>
        <ecNumber>2.7.11.1</ecNumber>
    </recommendedName>
    <alternativeName>
        <fullName>Growth-differentiation transition protein 2</fullName>
    </alternativeName>
</protein>
<gene>
    <name type="primary">gdt2</name>
    <name type="ORF">DDB_G0270666</name>
</gene>
<name>GDT2_DICDI</name>
<sequence>MNYILYILLILIIFSINNTFSIGSFVYTPDGYYNLYRINKFENFSKIPTKANSVNVEPHELYYPDICDSALKNKNSNEFSIDNFPGSPFLKANIKITKGSNMTLDPLLSIHPSYINILCIEGSFTAGSQQTLTLGGIIVLPGGNFHCNNCVLQFVDLSSTIIKIDPFGFLPGILSLGGSISLIGSQRILYSAKPIEDNVLEVNDISTLDPFNGFNVSIVSDSFPNVRTSRFTYNKNKLEMQDLTIPTTDLNIKLFFNDSGSLKFGGISTRTKSSIYITGDTKLHIENYLLDSIGKTSNKEYDDTKLTFSSDNPNNVTDIIIGKNQRFRNSLYIEFSNSVTIKNSVIIGNTGSSRSSLVFFQSNVNISGNLIVGTAGSSMIAQYGTEYIESSNNYFSLVLPNEFPTSPAFMDYGHEGNGIYSLSPNIFSTNDIFNGQKILYNFNFISRENVTGFDKDCFAPCDINSIVVPSLSQEPIDFSKNLVNPISINPVDYFLIVNSDEELKNTFFTIKDSTISSKIIVNLKGSGLVLKNIIGVNNFKLTGQVKRLDIYDSFFGSSTTPSLGDNGIKSSAVIIKNSSFYIDDFQLQNNQIYGSSIVPYLYELLNVDEFILVDSIFPTSQYQIPVGGKLDLIVKLVIISPVISRITCELESDNETITSSAISESVNKECKFPLTFKNDGSVNLKVTVKLKNVGDSEIMYIINFPKITIFSNYSFYSGWSMENSTENGIISVDGNSFKKGCSISSNDNSNNCTISNNIKYITNLPKLNISNDLNELFLNGITSINSNELVTITTRIDSETKYYQIQLFFIHQPIDDQPTPLSIYIENQPVFLLEPLESNSAPIFKNLTFNFDNINSLENINISFATRGNTYLTSMAIYSSLVIEYPIPVEKINLLPIIVPICVTVLVLLSILIVFFGARYYKHKKRRRLEIAVFGVELYSKKPSNNKSPVPSTPLIINSNQEQSSSNHISITVNRNSDIQTQSENNNLEPTTVETTTTTTTTAAGAILQTNVTLEMENLEIKPIINNNEPFFEDYSDEYDDSSDGAELNEDDVEDYINIIRGGNIKIEAEGELFVRQFERNTFDQEFFEYKKSKIPSPHLVPSLAHGDFIENPLNIIDILLDPVTNEIPLEHYLKTYKNRNGQSGKYRTNTQTHVLIADTIFQHCNDPDLPVSVSPYICDFGMNGRKSDLGEVCHDTITFKNKLSEPLYALFLFPEGDDSSITSSPFQSIELKPNVETSISLSVTLFSTTKYNEKVIVRFETLDVKQSWSTFVFLRLESELTNIIDFNEIIIKNYISEGTFGIVYRGIWRSSPVAVKLLKNEYVDHDEIEKEISLLERLRHPNILLYVGRFIFSGIHGIVTDYCSKGCLSKYIHENKYKITIIQKIRILIDISKACAYLHRNGITHRDLKPENILITSLNPKSLVCAKVSDFGTSKETNERYNLQTRRGTVAYMSNEILSQGSYTKSTDIYSFGMLCYELFSERIPYYSEPHWRIRELVLKNERPSLDQEIFKDTDISDIVTRCWSKNPSQRPTFDYLSKYLKHLLKKYDINNIIYDKDKKNKKKNKNNNNNNNNNNNNNNNNNNNNNNNDDHDDNNNNINDSDCDNNKNNNNNNNNNNNNNNNNNNNNNNNNNNNN</sequence>
<reference key="1">
    <citation type="journal article" date="2004" name="BMC Dev. Biol.">
        <title>Gdt2 regulates the transition of Dictyostelium cells from growth to differentiation.</title>
        <authorList>
            <person name="Chibalina M.V."/>
            <person name="Anjard C."/>
            <person name="Insall R.H."/>
        </authorList>
    </citation>
    <scope>NUCLEOTIDE SEQUENCE [MRNA]</scope>
    <scope>FUNCTION</scope>
    <scope>DEVELOPMENTAL STAGE</scope>
    <scope>DISRUPTION PHENOTYPE</scope>
</reference>
<reference key="2">
    <citation type="journal article" date="2005" name="Nature">
        <title>The genome of the social amoeba Dictyostelium discoideum.</title>
        <authorList>
            <person name="Eichinger L."/>
            <person name="Pachebat J.A."/>
            <person name="Gloeckner G."/>
            <person name="Rajandream M.A."/>
            <person name="Sucgang R."/>
            <person name="Berriman M."/>
            <person name="Song J."/>
            <person name="Olsen R."/>
            <person name="Szafranski K."/>
            <person name="Xu Q."/>
            <person name="Tunggal B."/>
            <person name="Kummerfeld S."/>
            <person name="Madera M."/>
            <person name="Konfortov B.A."/>
            <person name="Rivero F."/>
            <person name="Bankier A.T."/>
            <person name="Lehmann R."/>
            <person name="Hamlin N."/>
            <person name="Davies R."/>
            <person name="Gaudet P."/>
            <person name="Fey P."/>
            <person name="Pilcher K."/>
            <person name="Chen G."/>
            <person name="Saunders D."/>
            <person name="Sodergren E.J."/>
            <person name="Davis P."/>
            <person name="Kerhornou A."/>
            <person name="Nie X."/>
            <person name="Hall N."/>
            <person name="Anjard C."/>
            <person name="Hemphill L."/>
            <person name="Bason N."/>
            <person name="Farbrother P."/>
            <person name="Desany B."/>
            <person name="Just E."/>
            <person name="Morio T."/>
            <person name="Rost R."/>
            <person name="Churcher C.M."/>
            <person name="Cooper J."/>
            <person name="Haydock S."/>
            <person name="van Driessche N."/>
            <person name="Cronin A."/>
            <person name="Goodhead I."/>
            <person name="Muzny D.M."/>
            <person name="Mourier T."/>
            <person name="Pain A."/>
            <person name="Lu M."/>
            <person name="Harper D."/>
            <person name="Lindsay R."/>
            <person name="Hauser H."/>
            <person name="James K.D."/>
            <person name="Quiles M."/>
            <person name="Madan Babu M."/>
            <person name="Saito T."/>
            <person name="Buchrieser C."/>
            <person name="Wardroper A."/>
            <person name="Felder M."/>
            <person name="Thangavelu M."/>
            <person name="Johnson D."/>
            <person name="Knights A."/>
            <person name="Loulseged H."/>
            <person name="Mungall K.L."/>
            <person name="Oliver K."/>
            <person name="Price C."/>
            <person name="Quail M.A."/>
            <person name="Urushihara H."/>
            <person name="Hernandez J."/>
            <person name="Rabbinowitsch E."/>
            <person name="Steffen D."/>
            <person name="Sanders M."/>
            <person name="Ma J."/>
            <person name="Kohara Y."/>
            <person name="Sharp S."/>
            <person name="Simmonds M.N."/>
            <person name="Spiegler S."/>
            <person name="Tivey A."/>
            <person name="Sugano S."/>
            <person name="White B."/>
            <person name="Walker D."/>
            <person name="Woodward J.R."/>
            <person name="Winckler T."/>
            <person name="Tanaka Y."/>
            <person name="Shaulsky G."/>
            <person name="Schleicher M."/>
            <person name="Weinstock G.M."/>
            <person name="Rosenthal A."/>
            <person name="Cox E.C."/>
            <person name="Chisholm R.L."/>
            <person name="Gibbs R.A."/>
            <person name="Loomis W.F."/>
            <person name="Platzer M."/>
            <person name="Kay R.R."/>
            <person name="Williams J.G."/>
            <person name="Dear P.H."/>
            <person name="Noegel A.A."/>
            <person name="Barrell B.G."/>
            <person name="Kuspa A."/>
        </authorList>
    </citation>
    <scope>NUCLEOTIDE SEQUENCE [LARGE SCALE GENOMIC DNA]</scope>
    <source>
        <strain>AX4</strain>
    </source>
</reference>
<accession>Q55CZ1</accession>
<proteinExistence type="evidence at transcript level"/>